<evidence type="ECO:0000255" key="1">
    <source>
        <dbReference type="HAMAP-Rule" id="MF_00318"/>
    </source>
</evidence>
<feature type="chain" id="PRO_0000133957" description="Enolase">
    <location>
        <begin position="1"/>
        <end position="427"/>
    </location>
</feature>
<feature type="active site" description="Proton donor" evidence="1">
    <location>
        <position position="205"/>
    </location>
</feature>
<feature type="active site" description="Proton acceptor" evidence="1">
    <location>
        <position position="337"/>
    </location>
</feature>
<feature type="binding site" evidence="1">
    <location>
        <position position="163"/>
    </location>
    <ligand>
        <name>(2R)-2-phosphoglycerate</name>
        <dbReference type="ChEBI" id="CHEBI:58289"/>
    </ligand>
</feature>
<feature type="binding site" evidence="1">
    <location>
        <position position="242"/>
    </location>
    <ligand>
        <name>Mg(2+)</name>
        <dbReference type="ChEBI" id="CHEBI:18420"/>
    </ligand>
</feature>
<feature type="binding site" evidence="1">
    <location>
        <position position="285"/>
    </location>
    <ligand>
        <name>Mg(2+)</name>
        <dbReference type="ChEBI" id="CHEBI:18420"/>
    </ligand>
</feature>
<feature type="binding site" evidence="1">
    <location>
        <position position="312"/>
    </location>
    <ligand>
        <name>Mg(2+)</name>
        <dbReference type="ChEBI" id="CHEBI:18420"/>
    </ligand>
</feature>
<feature type="binding site" evidence="1">
    <location>
        <position position="337"/>
    </location>
    <ligand>
        <name>(2R)-2-phosphoglycerate</name>
        <dbReference type="ChEBI" id="CHEBI:58289"/>
    </ligand>
</feature>
<feature type="binding site" evidence="1">
    <location>
        <position position="366"/>
    </location>
    <ligand>
        <name>(2R)-2-phosphoglycerate</name>
        <dbReference type="ChEBI" id="CHEBI:58289"/>
    </ligand>
</feature>
<feature type="binding site" evidence="1">
    <location>
        <position position="367"/>
    </location>
    <ligand>
        <name>(2R)-2-phosphoglycerate</name>
        <dbReference type="ChEBI" id="CHEBI:58289"/>
    </ligand>
</feature>
<feature type="binding site" evidence="1">
    <location>
        <position position="388"/>
    </location>
    <ligand>
        <name>(2R)-2-phosphoglycerate</name>
        <dbReference type="ChEBI" id="CHEBI:58289"/>
    </ligand>
</feature>
<accession>Q6N5U6</accession>
<organism>
    <name type="scientific">Rhodopseudomonas palustris (strain ATCC BAA-98 / CGA009)</name>
    <dbReference type="NCBI Taxonomy" id="258594"/>
    <lineage>
        <taxon>Bacteria</taxon>
        <taxon>Pseudomonadati</taxon>
        <taxon>Pseudomonadota</taxon>
        <taxon>Alphaproteobacteria</taxon>
        <taxon>Hyphomicrobiales</taxon>
        <taxon>Nitrobacteraceae</taxon>
        <taxon>Rhodopseudomonas</taxon>
    </lineage>
</organism>
<protein>
    <recommendedName>
        <fullName evidence="1">Enolase</fullName>
        <ecNumber evidence="1">4.2.1.11</ecNumber>
    </recommendedName>
    <alternativeName>
        <fullName evidence="1">2-phospho-D-glycerate hydro-lyase</fullName>
    </alternativeName>
    <alternativeName>
        <fullName evidence="1">2-phosphoglycerate dehydratase</fullName>
    </alternativeName>
</protein>
<dbReference type="EC" id="4.2.1.11" evidence="1"/>
<dbReference type="EMBL" id="BX572602">
    <property type="protein sequence ID" value="CAE28315.1"/>
    <property type="molecule type" value="Genomic_DNA"/>
</dbReference>
<dbReference type="RefSeq" id="WP_011158423.1">
    <property type="nucleotide sequence ID" value="NZ_CP116810.1"/>
</dbReference>
<dbReference type="SMR" id="Q6N5U6"/>
<dbReference type="STRING" id="258594.RPA2874"/>
<dbReference type="GeneID" id="66893954"/>
<dbReference type="eggNOG" id="COG0148">
    <property type="taxonomic scope" value="Bacteria"/>
</dbReference>
<dbReference type="HOGENOM" id="CLU_031223_2_1_5"/>
<dbReference type="PhylomeDB" id="Q6N5U6"/>
<dbReference type="UniPathway" id="UPA00109">
    <property type="reaction ID" value="UER00187"/>
</dbReference>
<dbReference type="GO" id="GO:0009986">
    <property type="term" value="C:cell surface"/>
    <property type="evidence" value="ECO:0007669"/>
    <property type="project" value="UniProtKB-SubCell"/>
</dbReference>
<dbReference type="GO" id="GO:0005576">
    <property type="term" value="C:extracellular region"/>
    <property type="evidence" value="ECO:0007669"/>
    <property type="project" value="UniProtKB-SubCell"/>
</dbReference>
<dbReference type="GO" id="GO:0000015">
    <property type="term" value="C:phosphopyruvate hydratase complex"/>
    <property type="evidence" value="ECO:0007669"/>
    <property type="project" value="InterPro"/>
</dbReference>
<dbReference type="GO" id="GO:0000287">
    <property type="term" value="F:magnesium ion binding"/>
    <property type="evidence" value="ECO:0007669"/>
    <property type="project" value="UniProtKB-UniRule"/>
</dbReference>
<dbReference type="GO" id="GO:0004634">
    <property type="term" value="F:phosphopyruvate hydratase activity"/>
    <property type="evidence" value="ECO:0007669"/>
    <property type="project" value="UniProtKB-UniRule"/>
</dbReference>
<dbReference type="GO" id="GO:0006096">
    <property type="term" value="P:glycolytic process"/>
    <property type="evidence" value="ECO:0007669"/>
    <property type="project" value="UniProtKB-UniRule"/>
</dbReference>
<dbReference type="CDD" id="cd03313">
    <property type="entry name" value="enolase"/>
    <property type="match status" value="1"/>
</dbReference>
<dbReference type="FunFam" id="3.20.20.120:FF:000001">
    <property type="entry name" value="Enolase"/>
    <property type="match status" value="1"/>
</dbReference>
<dbReference type="FunFam" id="3.30.390.10:FF:000001">
    <property type="entry name" value="Enolase"/>
    <property type="match status" value="1"/>
</dbReference>
<dbReference type="Gene3D" id="3.20.20.120">
    <property type="entry name" value="Enolase-like C-terminal domain"/>
    <property type="match status" value="1"/>
</dbReference>
<dbReference type="Gene3D" id="3.30.390.10">
    <property type="entry name" value="Enolase-like, N-terminal domain"/>
    <property type="match status" value="1"/>
</dbReference>
<dbReference type="HAMAP" id="MF_00318">
    <property type="entry name" value="Enolase"/>
    <property type="match status" value="1"/>
</dbReference>
<dbReference type="InterPro" id="IPR000941">
    <property type="entry name" value="Enolase"/>
</dbReference>
<dbReference type="InterPro" id="IPR036849">
    <property type="entry name" value="Enolase-like_C_sf"/>
</dbReference>
<dbReference type="InterPro" id="IPR029017">
    <property type="entry name" value="Enolase-like_N"/>
</dbReference>
<dbReference type="InterPro" id="IPR020810">
    <property type="entry name" value="Enolase_C"/>
</dbReference>
<dbReference type="InterPro" id="IPR020809">
    <property type="entry name" value="Enolase_CS"/>
</dbReference>
<dbReference type="InterPro" id="IPR020811">
    <property type="entry name" value="Enolase_N"/>
</dbReference>
<dbReference type="NCBIfam" id="TIGR01060">
    <property type="entry name" value="eno"/>
    <property type="match status" value="1"/>
</dbReference>
<dbReference type="PANTHER" id="PTHR11902">
    <property type="entry name" value="ENOLASE"/>
    <property type="match status" value="1"/>
</dbReference>
<dbReference type="PANTHER" id="PTHR11902:SF1">
    <property type="entry name" value="ENOLASE"/>
    <property type="match status" value="1"/>
</dbReference>
<dbReference type="Pfam" id="PF00113">
    <property type="entry name" value="Enolase_C"/>
    <property type="match status" value="1"/>
</dbReference>
<dbReference type="Pfam" id="PF03952">
    <property type="entry name" value="Enolase_N"/>
    <property type="match status" value="1"/>
</dbReference>
<dbReference type="PIRSF" id="PIRSF001400">
    <property type="entry name" value="Enolase"/>
    <property type="match status" value="1"/>
</dbReference>
<dbReference type="PRINTS" id="PR00148">
    <property type="entry name" value="ENOLASE"/>
</dbReference>
<dbReference type="SFLD" id="SFLDS00001">
    <property type="entry name" value="Enolase"/>
    <property type="match status" value="1"/>
</dbReference>
<dbReference type="SFLD" id="SFLDF00002">
    <property type="entry name" value="enolase"/>
    <property type="match status" value="1"/>
</dbReference>
<dbReference type="SMART" id="SM01192">
    <property type="entry name" value="Enolase_C"/>
    <property type="match status" value="1"/>
</dbReference>
<dbReference type="SMART" id="SM01193">
    <property type="entry name" value="Enolase_N"/>
    <property type="match status" value="1"/>
</dbReference>
<dbReference type="SUPFAM" id="SSF51604">
    <property type="entry name" value="Enolase C-terminal domain-like"/>
    <property type="match status" value="1"/>
</dbReference>
<dbReference type="SUPFAM" id="SSF54826">
    <property type="entry name" value="Enolase N-terminal domain-like"/>
    <property type="match status" value="1"/>
</dbReference>
<dbReference type="PROSITE" id="PS00164">
    <property type="entry name" value="ENOLASE"/>
    <property type="match status" value="1"/>
</dbReference>
<keyword id="KW-0963">Cytoplasm</keyword>
<keyword id="KW-0324">Glycolysis</keyword>
<keyword id="KW-0456">Lyase</keyword>
<keyword id="KW-0460">Magnesium</keyword>
<keyword id="KW-0479">Metal-binding</keyword>
<keyword id="KW-0964">Secreted</keyword>
<reference key="1">
    <citation type="journal article" date="2004" name="Nat. Biotechnol.">
        <title>Complete genome sequence of the metabolically versatile photosynthetic bacterium Rhodopseudomonas palustris.</title>
        <authorList>
            <person name="Larimer F.W."/>
            <person name="Chain P."/>
            <person name="Hauser L."/>
            <person name="Lamerdin J.E."/>
            <person name="Malfatti S."/>
            <person name="Do L."/>
            <person name="Land M.L."/>
            <person name="Pelletier D.A."/>
            <person name="Beatty J.T."/>
            <person name="Lang A.S."/>
            <person name="Tabita F.R."/>
            <person name="Gibson J.L."/>
            <person name="Hanson T.E."/>
            <person name="Bobst C."/>
            <person name="Torres y Torres J.L."/>
            <person name="Peres C."/>
            <person name="Harrison F.H."/>
            <person name="Gibson J."/>
            <person name="Harwood C.S."/>
        </authorList>
    </citation>
    <scope>NUCLEOTIDE SEQUENCE [LARGE SCALE GENOMIC DNA]</scope>
    <source>
        <strain>ATCC BAA-98 / CGA009</strain>
    </source>
</reference>
<name>ENO_RHOPA</name>
<proteinExistence type="inferred from homology"/>
<comment type="function">
    <text evidence="1">Catalyzes the reversible conversion of 2-phosphoglycerate (2-PG) into phosphoenolpyruvate (PEP). It is essential for the degradation of carbohydrates via glycolysis.</text>
</comment>
<comment type="catalytic activity">
    <reaction evidence="1">
        <text>(2R)-2-phosphoglycerate = phosphoenolpyruvate + H2O</text>
        <dbReference type="Rhea" id="RHEA:10164"/>
        <dbReference type="ChEBI" id="CHEBI:15377"/>
        <dbReference type="ChEBI" id="CHEBI:58289"/>
        <dbReference type="ChEBI" id="CHEBI:58702"/>
        <dbReference type="EC" id="4.2.1.11"/>
    </reaction>
</comment>
<comment type="cofactor">
    <cofactor evidence="1">
        <name>Mg(2+)</name>
        <dbReference type="ChEBI" id="CHEBI:18420"/>
    </cofactor>
    <text evidence="1">Binds a second Mg(2+) ion via substrate during catalysis.</text>
</comment>
<comment type="pathway">
    <text evidence="1">Carbohydrate degradation; glycolysis; pyruvate from D-glyceraldehyde 3-phosphate: step 4/5.</text>
</comment>
<comment type="subcellular location">
    <subcellularLocation>
        <location evidence="1">Cytoplasm</location>
    </subcellularLocation>
    <subcellularLocation>
        <location evidence="1">Secreted</location>
    </subcellularLocation>
    <subcellularLocation>
        <location evidence="1">Cell surface</location>
    </subcellularLocation>
    <text evidence="1">Fractions of enolase are present in both the cytoplasm and on the cell surface.</text>
</comment>
<comment type="similarity">
    <text evidence="1">Belongs to the enolase family.</text>
</comment>
<gene>
    <name evidence="1" type="primary">eno</name>
    <name type="ordered locus">RPA2874</name>
</gene>
<sequence>MTAIVDIIGREILDSRGNPTVEVDVVLEDGSVGRAAVPSGASTGAHEAVELRDGDKARYLGKGVQKAVEAVNGELFDALGGMDAEQQVQIDQTMIELDGTPNKGRIGANAILGVSLAAAKAAAASYDMPLYRYVGGTSARTLPVPMMNIVNGGVHADNPIDFQEFMIMPVGAPTFADALRCGSEIFHTLKGELKKAGHNTNVGDEGGFAPNLPSADAALDFVMAAIGKAGYKAGGDVMLALDCAATEFFKDGSYVYGGENKTRSRSEQAKYLADLVARYPIVSIEDGMSEDDMDGWKELTDLIGSKCQLVGDDLFVTNVTRLADGIKNGRANSILIKVNQIGTLTETLAAVEMAHKAGYTAVMSHRSGETEDSTIADLAVATNCGQIKTGSLARADRTAKYNQLLRIEQELGAHAHYAGKAALKALR</sequence>